<gene>
    <name type="ORF">SPBC30D10.05c</name>
</gene>
<dbReference type="EC" id="1.-.-.-"/>
<dbReference type="EMBL" id="CU329671">
    <property type="protein sequence ID" value="CAB10800.1"/>
    <property type="molecule type" value="Genomic_DNA"/>
</dbReference>
<dbReference type="PIR" id="T40191">
    <property type="entry name" value="T40191"/>
</dbReference>
<dbReference type="RefSeq" id="NP_596280.1">
    <property type="nucleotide sequence ID" value="NM_001022201.2"/>
</dbReference>
<dbReference type="SMR" id="O14351"/>
<dbReference type="BioGRID" id="276930">
    <property type="interactions" value="9"/>
</dbReference>
<dbReference type="FunCoup" id="O14351">
    <property type="interactions" value="32"/>
</dbReference>
<dbReference type="STRING" id="284812.O14351"/>
<dbReference type="iPTMnet" id="O14351"/>
<dbReference type="PaxDb" id="4896-SPBC30D10.05c.1"/>
<dbReference type="EnsemblFungi" id="SPBC30D10.05c.1">
    <property type="protein sequence ID" value="SPBC30D10.05c.1:pep"/>
    <property type="gene ID" value="SPBC30D10.05c"/>
</dbReference>
<dbReference type="KEGG" id="spo:2540402"/>
<dbReference type="PomBase" id="SPBC30D10.05c"/>
<dbReference type="VEuPathDB" id="FungiDB:SPBC30D10.05c"/>
<dbReference type="eggNOG" id="KOG1204">
    <property type="taxonomic scope" value="Eukaryota"/>
</dbReference>
<dbReference type="HOGENOM" id="CLU_010194_2_11_1"/>
<dbReference type="InParanoid" id="O14351"/>
<dbReference type="OMA" id="PGDMATD"/>
<dbReference type="PhylomeDB" id="O14351"/>
<dbReference type="PRO" id="PR:O14351"/>
<dbReference type="Proteomes" id="UP000002485">
    <property type="component" value="Chromosome II"/>
</dbReference>
<dbReference type="GO" id="GO:0005829">
    <property type="term" value="C:cytosol"/>
    <property type="evidence" value="ECO:0007005"/>
    <property type="project" value="PomBase"/>
</dbReference>
<dbReference type="GO" id="GO:0005634">
    <property type="term" value="C:nucleus"/>
    <property type="evidence" value="ECO:0007005"/>
    <property type="project" value="PomBase"/>
</dbReference>
<dbReference type="GO" id="GO:0050664">
    <property type="term" value="F:oxidoreductase activity, acting on NAD(P)H, oxygen as acceptor"/>
    <property type="evidence" value="ECO:0000318"/>
    <property type="project" value="GO_Central"/>
</dbReference>
<dbReference type="GO" id="GO:0004757">
    <property type="term" value="F:sepiapterin reductase (NADP+) activity"/>
    <property type="evidence" value="ECO:0000250"/>
    <property type="project" value="PomBase"/>
</dbReference>
<dbReference type="GO" id="GO:0006729">
    <property type="term" value="P:tetrahydrobiopterin biosynthetic process"/>
    <property type="evidence" value="ECO:0000250"/>
    <property type="project" value="PomBase"/>
</dbReference>
<dbReference type="CDD" id="cd05367">
    <property type="entry name" value="SPR-like_SDR_c"/>
    <property type="match status" value="1"/>
</dbReference>
<dbReference type="FunFam" id="3.40.50.720:FF:000281">
    <property type="entry name" value="Uncharacterized oxidoreductase YIR035C"/>
    <property type="match status" value="1"/>
</dbReference>
<dbReference type="Gene3D" id="3.40.50.720">
    <property type="entry name" value="NAD(P)-binding Rossmann-like Domain"/>
    <property type="match status" value="1"/>
</dbReference>
<dbReference type="InterPro" id="IPR036291">
    <property type="entry name" value="NAD(P)-bd_dom_sf"/>
</dbReference>
<dbReference type="InterPro" id="IPR020904">
    <property type="entry name" value="Sc_DH/Rdtase_CS"/>
</dbReference>
<dbReference type="InterPro" id="IPR002347">
    <property type="entry name" value="SDR_fam"/>
</dbReference>
<dbReference type="PANTHER" id="PTHR43008">
    <property type="entry name" value="BENZIL REDUCTASE"/>
    <property type="match status" value="1"/>
</dbReference>
<dbReference type="PANTHER" id="PTHR43008:SF8">
    <property type="entry name" value="BENZIL REDUCTASE ((S)-BENZOIN FORMING) IRC24"/>
    <property type="match status" value="1"/>
</dbReference>
<dbReference type="Pfam" id="PF00106">
    <property type="entry name" value="adh_short"/>
    <property type="match status" value="1"/>
</dbReference>
<dbReference type="PRINTS" id="PR00081">
    <property type="entry name" value="GDHRDH"/>
</dbReference>
<dbReference type="SUPFAM" id="SSF51735">
    <property type="entry name" value="NAD(P)-binding Rossmann-fold domains"/>
    <property type="match status" value="1"/>
</dbReference>
<dbReference type="PROSITE" id="PS00061">
    <property type="entry name" value="ADH_SHORT"/>
    <property type="match status" value="1"/>
</dbReference>
<organism>
    <name type="scientific">Schizosaccharomyces pombe (strain 972 / ATCC 24843)</name>
    <name type="common">Fission yeast</name>
    <dbReference type="NCBI Taxonomy" id="284812"/>
    <lineage>
        <taxon>Eukaryota</taxon>
        <taxon>Fungi</taxon>
        <taxon>Dikarya</taxon>
        <taxon>Ascomycota</taxon>
        <taxon>Taphrinomycotina</taxon>
        <taxon>Schizosaccharomycetes</taxon>
        <taxon>Schizosaccharomycetales</taxon>
        <taxon>Schizosaccharomycetaceae</taxon>
        <taxon>Schizosaccharomyces</taxon>
    </lineage>
</organism>
<keyword id="KW-0521">NADP</keyword>
<keyword id="KW-0560">Oxidoreductase</keyword>
<keyword id="KW-1185">Reference proteome</keyword>
<proteinExistence type="inferred from homology"/>
<comment type="similarity">
    <text evidence="4">Belongs to the short-chain dehydrogenases/reductases (SDR) family.</text>
</comment>
<evidence type="ECO:0000250" key="1">
    <source>
        <dbReference type="UniProtKB" id="L0E2Z4"/>
    </source>
</evidence>
<evidence type="ECO:0000250" key="2">
    <source>
        <dbReference type="UniProtKB" id="O93868"/>
    </source>
</evidence>
<evidence type="ECO:0000255" key="3">
    <source>
        <dbReference type="PROSITE-ProRule" id="PRU10001"/>
    </source>
</evidence>
<evidence type="ECO:0000305" key="4"/>
<sequence>MAETAEKVILLTGSSKGIGLATAEALQKKAKVIAVSRSLTPELETLLIQNPDSFVHVKGDVTEVGKASIETAIKKFGKLDSVILNAGVLEPIAKIADADINEWRKLFDINFFSVVETVKYAIPHLRKTKGTIVIVSSGAAVRVFPAWAAYCCSKAAINMLVMNLGSEEPDIMSVAVRPGVVDTPMQVSIRNDSNKEAMGGDTHNFFKELKTSGQLVAPQDIAKALSFLALNNNPKLTGQFVEWKSFV</sequence>
<accession>O14351</accession>
<reference key="1">
    <citation type="journal article" date="2002" name="Nature">
        <title>The genome sequence of Schizosaccharomyces pombe.</title>
        <authorList>
            <person name="Wood V."/>
            <person name="Gwilliam R."/>
            <person name="Rajandream M.A."/>
            <person name="Lyne M.H."/>
            <person name="Lyne R."/>
            <person name="Stewart A."/>
            <person name="Sgouros J.G."/>
            <person name="Peat N."/>
            <person name="Hayles J."/>
            <person name="Baker S.G."/>
            <person name="Basham D."/>
            <person name="Bowman S."/>
            <person name="Brooks K."/>
            <person name="Brown D."/>
            <person name="Brown S."/>
            <person name="Chillingworth T."/>
            <person name="Churcher C.M."/>
            <person name="Collins M."/>
            <person name="Connor R."/>
            <person name="Cronin A."/>
            <person name="Davis P."/>
            <person name="Feltwell T."/>
            <person name="Fraser A."/>
            <person name="Gentles S."/>
            <person name="Goble A."/>
            <person name="Hamlin N."/>
            <person name="Harris D.E."/>
            <person name="Hidalgo J."/>
            <person name="Hodgson G."/>
            <person name="Holroyd S."/>
            <person name="Hornsby T."/>
            <person name="Howarth S."/>
            <person name="Huckle E.J."/>
            <person name="Hunt S."/>
            <person name="Jagels K."/>
            <person name="James K.D."/>
            <person name="Jones L."/>
            <person name="Jones M."/>
            <person name="Leather S."/>
            <person name="McDonald S."/>
            <person name="McLean J."/>
            <person name="Mooney P."/>
            <person name="Moule S."/>
            <person name="Mungall K.L."/>
            <person name="Murphy L.D."/>
            <person name="Niblett D."/>
            <person name="Odell C."/>
            <person name="Oliver K."/>
            <person name="O'Neil S."/>
            <person name="Pearson D."/>
            <person name="Quail M.A."/>
            <person name="Rabbinowitsch E."/>
            <person name="Rutherford K.M."/>
            <person name="Rutter S."/>
            <person name="Saunders D."/>
            <person name="Seeger K."/>
            <person name="Sharp S."/>
            <person name="Skelton J."/>
            <person name="Simmonds M.N."/>
            <person name="Squares R."/>
            <person name="Squares S."/>
            <person name="Stevens K."/>
            <person name="Taylor K."/>
            <person name="Taylor R.G."/>
            <person name="Tivey A."/>
            <person name="Walsh S.V."/>
            <person name="Warren T."/>
            <person name="Whitehead S."/>
            <person name="Woodward J.R."/>
            <person name="Volckaert G."/>
            <person name="Aert R."/>
            <person name="Robben J."/>
            <person name="Grymonprez B."/>
            <person name="Weltjens I."/>
            <person name="Vanstreels E."/>
            <person name="Rieger M."/>
            <person name="Schaefer M."/>
            <person name="Mueller-Auer S."/>
            <person name="Gabel C."/>
            <person name="Fuchs M."/>
            <person name="Duesterhoeft A."/>
            <person name="Fritzc C."/>
            <person name="Holzer E."/>
            <person name="Moestl D."/>
            <person name="Hilbert H."/>
            <person name="Borzym K."/>
            <person name="Langer I."/>
            <person name="Beck A."/>
            <person name="Lehrach H."/>
            <person name="Reinhardt R."/>
            <person name="Pohl T.M."/>
            <person name="Eger P."/>
            <person name="Zimmermann W."/>
            <person name="Wedler H."/>
            <person name="Wambutt R."/>
            <person name="Purnelle B."/>
            <person name="Goffeau A."/>
            <person name="Cadieu E."/>
            <person name="Dreano S."/>
            <person name="Gloux S."/>
            <person name="Lelaure V."/>
            <person name="Mottier S."/>
            <person name="Galibert F."/>
            <person name="Aves S.J."/>
            <person name="Xiang Z."/>
            <person name="Hunt C."/>
            <person name="Moore K."/>
            <person name="Hurst S.M."/>
            <person name="Lucas M."/>
            <person name="Rochet M."/>
            <person name="Gaillardin C."/>
            <person name="Tallada V.A."/>
            <person name="Garzon A."/>
            <person name="Thode G."/>
            <person name="Daga R.R."/>
            <person name="Cruzado L."/>
            <person name="Jimenez J."/>
            <person name="Sanchez M."/>
            <person name="del Rey F."/>
            <person name="Benito J."/>
            <person name="Dominguez A."/>
            <person name="Revuelta J.L."/>
            <person name="Moreno S."/>
            <person name="Armstrong J."/>
            <person name="Forsburg S.L."/>
            <person name="Cerutti L."/>
            <person name="Lowe T."/>
            <person name="McCombie W.R."/>
            <person name="Paulsen I."/>
            <person name="Potashkin J."/>
            <person name="Shpakovski G.V."/>
            <person name="Ussery D."/>
            <person name="Barrell B.G."/>
            <person name="Nurse P."/>
        </authorList>
    </citation>
    <scope>NUCLEOTIDE SEQUENCE [LARGE SCALE GENOMIC DNA]</scope>
    <source>
        <strain>972 / ATCC 24843</strain>
    </source>
</reference>
<protein>
    <recommendedName>
        <fullName>Uncharacterized oxidoreductase C30D10.05c</fullName>
        <ecNumber>1.-.-.-</ecNumber>
    </recommendedName>
</protein>
<name>YB45_SCHPO</name>
<feature type="chain" id="PRO_0000054876" description="Uncharacterized oxidoreductase C30D10.05c">
    <location>
        <begin position="1"/>
        <end position="247"/>
    </location>
</feature>
<feature type="active site" description="Proton donor" evidence="2">
    <location>
        <position position="136"/>
    </location>
</feature>
<feature type="active site" description="Proton acceptor" evidence="3">
    <location>
        <position position="150"/>
    </location>
</feature>
<feature type="active site" description="Lowers pKa of active site Tyr" evidence="2">
    <location>
        <position position="154"/>
    </location>
</feature>
<feature type="binding site" evidence="1">
    <location>
        <position position="11"/>
    </location>
    <ligand>
        <name>NADP(+)</name>
        <dbReference type="ChEBI" id="CHEBI:58349"/>
    </ligand>
</feature>
<feature type="binding site" evidence="2">
    <location>
        <position position="85"/>
    </location>
    <ligand>
        <name>NADP(+)</name>
        <dbReference type="ChEBI" id="CHEBI:58349"/>
    </ligand>
</feature>
<feature type="binding site" evidence="1">
    <location>
        <position position="119"/>
    </location>
    <ligand>
        <name>NADP(+)</name>
        <dbReference type="ChEBI" id="CHEBI:58349"/>
    </ligand>
</feature>
<feature type="binding site" evidence="2">
    <location>
        <position position="150"/>
    </location>
    <ligand>
        <name>NADP(+)</name>
        <dbReference type="ChEBI" id="CHEBI:58349"/>
    </ligand>
</feature>
<feature type="binding site" evidence="2">
    <location>
        <position position="154"/>
    </location>
    <ligand>
        <name>NADP(+)</name>
        <dbReference type="ChEBI" id="CHEBI:58349"/>
    </ligand>
</feature>
<feature type="binding site" evidence="2">
    <location>
        <position position="181"/>
    </location>
    <ligand>
        <name>NADP(+)</name>
        <dbReference type="ChEBI" id="CHEBI:58349"/>
    </ligand>
</feature>
<feature type="binding site" evidence="1">
    <location>
        <position position="183"/>
    </location>
    <ligand>
        <name>NADP(+)</name>
        <dbReference type="ChEBI" id="CHEBI:58349"/>
    </ligand>
</feature>